<sequence length="167" mass="19531">MASAEPLTALSRWYLYAIHGYFCEVMFTAAWEFVVNLNWKFPGVTSVWALFIYGTSILIVERMYLRLRGRCPLLLRCLIYTLWTYLWEFTTGFILRQFNACPWDYSQFDFDFMGLITLEYAVPWFCGALIMEQFIIRNTLRLRFDKDAEPGEPSGALALANGHVKTD</sequence>
<proteinExistence type="evidence at protein level"/>
<keyword id="KW-0472">Membrane</keyword>
<keyword id="KW-1185">Reference proteome</keyword>
<keyword id="KW-0812">Transmembrane</keyword>
<keyword id="KW-1133">Transmembrane helix</keyword>
<protein>
    <recommendedName>
        <fullName>Transmembrane protein 229B</fullName>
    </recommendedName>
</protein>
<name>T229B_HUMAN</name>
<feature type="chain" id="PRO_0000263681" description="Transmembrane protein 229B">
    <location>
        <begin position="1"/>
        <end position="167"/>
    </location>
</feature>
<feature type="topological domain" description="Cytoplasmic" evidence="1">
    <location>
        <begin position="1"/>
        <end position="14"/>
    </location>
</feature>
<feature type="transmembrane region" description="Helical" evidence="1">
    <location>
        <begin position="15"/>
        <end position="35"/>
    </location>
</feature>
<feature type="topological domain" description="Extracellular" evidence="1">
    <location>
        <begin position="36"/>
        <end position="40"/>
    </location>
</feature>
<feature type="transmembrane region" description="Helical" evidence="1">
    <location>
        <begin position="41"/>
        <end position="61"/>
    </location>
</feature>
<feature type="topological domain" description="Cytoplasmic" evidence="1">
    <location>
        <begin position="62"/>
        <end position="73"/>
    </location>
</feature>
<feature type="transmembrane region" description="Helical" evidence="1">
    <location>
        <begin position="74"/>
        <end position="94"/>
    </location>
</feature>
<feature type="topological domain" description="Extracellular" evidence="1">
    <location>
        <begin position="95"/>
        <end position="109"/>
    </location>
</feature>
<feature type="transmembrane region" description="Helical" evidence="1">
    <location>
        <begin position="110"/>
        <end position="130"/>
    </location>
</feature>
<feature type="topological domain" description="Cytoplasmic" evidence="1">
    <location>
        <begin position="131"/>
        <end position="167"/>
    </location>
</feature>
<comment type="interaction">
    <interactant intactId="EBI-12195227">
        <id>Q8NBD8</id>
    </interactant>
    <interactant intactId="EBI-10961679">
        <id>Q5T8D3-2</id>
        <label>ACBD5</label>
    </interactant>
    <organismsDiffer>false</organismsDiffer>
    <experiments>3</experiments>
</comment>
<comment type="interaction">
    <interactant intactId="EBI-12195227">
        <id>Q8NBD8</id>
    </interactant>
    <interactant intactId="EBI-13059134">
        <id>Q13520</id>
        <label>AQP6</label>
    </interactant>
    <organismsDiffer>false</organismsDiffer>
    <experiments>3</experiments>
</comment>
<comment type="interaction">
    <interactant intactId="EBI-12195227">
        <id>Q8NBD8</id>
    </interactant>
    <interactant intactId="EBI-11343438">
        <id>Q3SXY8</id>
        <label>ARL13B</label>
    </interactant>
    <organismsDiffer>false</organismsDiffer>
    <experiments>3</experiments>
</comment>
<comment type="interaction">
    <interactant intactId="EBI-12195227">
        <id>Q8NBD8</id>
    </interactant>
    <interactant intactId="EBI-700794">
        <id>Q13323</id>
        <label>BIK</label>
    </interactant>
    <organismsDiffer>false</organismsDiffer>
    <experiments>3</experiments>
</comment>
<comment type="interaction">
    <interactant intactId="EBI-12195227">
        <id>Q8NBD8</id>
    </interactant>
    <interactant intactId="EBI-6657396">
        <id>P19397</id>
        <label>CD53</label>
    </interactant>
    <organismsDiffer>false</organismsDiffer>
    <experiments>3</experiments>
</comment>
<comment type="interaction">
    <interactant intactId="EBI-12195227">
        <id>Q8NBD8</id>
    </interactant>
    <interactant intactId="EBI-7797864">
        <id>P11912</id>
        <label>CD79A</label>
    </interactant>
    <organismsDiffer>false</organismsDiffer>
    <experiments>3</experiments>
</comment>
<comment type="interaction">
    <interactant intactId="EBI-12195227">
        <id>Q8NBD8</id>
    </interactant>
    <interactant intactId="EBI-18013275">
        <id>Q7Z7G2</id>
        <label>CPLX4</label>
    </interactant>
    <organismsDiffer>false</organismsDiffer>
    <experiments>3</experiments>
</comment>
<comment type="interaction">
    <interactant intactId="EBI-12195227">
        <id>Q8NBD8</id>
    </interactant>
    <interactant intactId="EBI-6942903">
        <id>Q96BA8</id>
        <label>CREB3L1</label>
    </interactant>
    <organismsDiffer>false</organismsDiffer>
    <experiments>3</experiments>
</comment>
<comment type="interaction">
    <interactant intactId="EBI-12195227">
        <id>Q8NBD8</id>
    </interactant>
    <interactant intactId="EBI-3915253">
        <id>Q15125</id>
        <label>EBP</label>
    </interactant>
    <organismsDiffer>false</organismsDiffer>
    <experiments>3</experiments>
</comment>
<comment type="interaction">
    <interactant intactId="EBI-12195227">
        <id>Q8NBD8</id>
    </interactant>
    <interactant intactId="EBI-781551">
        <id>Q9Y282</id>
        <label>ERGIC3</label>
    </interactant>
    <organismsDiffer>false</organismsDiffer>
    <experiments>3</experiments>
</comment>
<comment type="interaction">
    <interactant intactId="EBI-12195227">
        <id>Q8NBD8</id>
    </interactant>
    <interactant intactId="EBI-18304435">
        <id>Q5JX71</id>
        <label>FAM209A</label>
    </interactant>
    <organismsDiffer>false</organismsDiffer>
    <experiments>3</experiments>
</comment>
<comment type="interaction">
    <interactant intactId="EBI-12195227">
        <id>Q8NBD8</id>
    </interactant>
    <interactant intactId="EBI-3918971">
        <id>Q9Y680</id>
        <label>FKBP7</label>
    </interactant>
    <organismsDiffer>false</organismsDiffer>
    <experiments>3</experiments>
</comment>
<comment type="interaction">
    <interactant intactId="EBI-12195227">
        <id>Q8NBD8</id>
    </interactant>
    <interactant intactId="EBI-3917143">
        <id>Q5T7V8</id>
        <label>GORAB</label>
    </interactant>
    <organismsDiffer>false</organismsDiffer>
    <experiments>3</experiments>
</comment>
<comment type="interaction">
    <interactant intactId="EBI-12195227">
        <id>Q8NBD8</id>
    </interactant>
    <interactant intactId="EBI-11721746">
        <id>Q8TED1</id>
        <label>GPX8</label>
    </interactant>
    <organismsDiffer>false</organismsDiffer>
    <experiments>3</experiments>
</comment>
<comment type="interaction">
    <interactant intactId="EBI-12195227">
        <id>Q8NBD8</id>
    </interactant>
    <interactant intactId="EBI-18053395">
        <id>Q7Z5P4</id>
        <label>HSD17B13</label>
    </interactant>
    <organismsDiffer>false</organismsDiffer>
    <experiments>3</experiments>
</comment>
<comment type="interaction">
    <interactant intactId="EBI-12195227">
        <id>Q8NBD8</id>
    </interactant>
    <interactant intactId="EBI-2568251">
        <id>P11215</id>
        <label>ITGAM</label>
    </interactant>
    <organismsDiffer>false</organismsDiffer>
    <experiments>3</experiments>
</comment>
<comment type="interaction">
    <interactant intactId="EBI-12195227">
        <id>Q8NBD8</id>
    </interactant>
    <interactant intactId="EBI-2820517">
        <id>Q8TAF8</id>
        <label>LHFPL5</label>
    </interactant>
    <organismsDiffer>false</organismsDiffer>
    <experiments>3</experiments>
</comment>
<comment type="interaction">
    <interactant intactId="EBI-12195227">
        <id>Q8NBD8</id>
    </interactant>
    <interactant intactId="EBI-11956541">
        <id>Q9GZY8-5</id>
        <label>MFF</label>
    </interactant>
    <organismsDiffer>false</organismsDiffer>
    <experiments>3</experiments>
</comment>
<comment type="interaction">
    <interactant intactId="EBI-12195227">
        <id>Q8NBD8</id>
    </interactant>
    <interactant intactId="EBI-373355">
        <id>Q5SR56</id>
        <label>MFSD14B</label>
    </interactant>
    <organismsDiffer>false</organismsDiffer>
    <experiments>3</experiments>
</comment>
<comment type="interaction">
    <interactant intactId="EBI-12195227">
        <id>Q8NBD8</id>
    </interactant>
    <interactant intactId="EBI-724754">
        <id>O14880</id>
        <label>MGST3</label>
    </interactant>
    <organismsDiffer>false</organismsDiffer>
    <experiments>3</experiments>
</comment>
<comment type="interaction">
    <interactant intactId="EBI-12195227">
        <id>Q8NBD8</id>
    </interactant>
    <interactant intactId="EBI-6163737">
        <id>Q8N4V1</id>
        <label>MMGT1</label>
    </interactant>
    <organismsDiffer>false</organismsDiffer>
    <experiments>3</experiments>
</comment>
<comment type="interaction">
    <interactant intactId="EBI-12195227">
        <id>Q8NBD8</id>
    </interactant>
    <interactant intactId="EBI-17263240">
        <id>P15941-11</id>
        <label>MUC1</label>
    </interactant>
    <organismsDiffer>false</organismsDiffer>
    <experiments>3</experiments>
</comment>
<comment type="interaction">
    <interactant intactId="EBI-12195227">
        <id>Q8NBD8</id>
    </interactant>
    <interactant intactId="EBI-709754">
        <id>Q9HB07</id>
        <label>MYG1</label>
    </interactant>
    <organismsDiffer>false</organismsDiffer>
    <experiments>3</experiments>
</comment>
<comment type="interaction">
    <interactant intactId="EBI-12195227">
        <id>Q8NBD8</id>
    </interactant>
    <interactant intactId="EBI-19157577">
        <id>O76036-6</id>
        <label>NCR1</label>
    </interactant>
    <organismsDiffer>false</organismsDiffer>
    <experiments>3</experiments>
</comment>
<comment type="interaction">
    <interactant intactId="EBI-12195227">
        <id>Q8NBD8</id>
    </interactant>
    <interactant intactId="EBI-10969203">
        <id>O14524-2</id>
        <label>NEMP1</label>
    </interactant>
    <organismsDiffer>false</organismsDiffer>
    <experiments>3</experiments>
</comment>
<comment type="interaction">
    <interactant intactId="EBI-12195227">
        <id>Q8NBD8</id>
    </interactant>
    <interactant intactId="EBI-7037612">
        <id>Q96RD7</id>
        <label>PANX1</label>
    </interactant>
    <organismsDiffer>false</organismsDiffer>
    <experiments>3</experiments>
</comment>
<comment type="interaction">
    <interactant intactId="EBI-12195227">
        <id>Q8NBD8</id>
    </interactant>
    <interactant intactId="EBI-17630288">
        <id>P57054</id>
        <label>PIGP</label>
    </interactant>
    <organismsDiffer>false</organismsDiffer>
    <experiments>3</experiments>
</comment>
<comment type="interaction">
    <interactant intactId="EBI-12195227">
        <id>Q8NBD8</id>
    </interactant>
    <interactant intactId="EBI-12257782">
        <id>Q99640-2</id>
        <label>PKMYT1</label>
    </interactant>
    <organismsDiffer>false</organismsDiffer>
    <experiments>3</experiments>
</comment>
<comment type="interaction">
    <interactant intactId="EBI-12195227">
        <id>Q8NBD8</id>
    </interactant>
    <interactant intactId="EBI-3919694">
        <id>P15151</id>
        <label>PVR</label>
    </interactant>
    <organismsDiffer>false</organismsDiffer>
    <experiments>3</experiments>
</comment>
<comment type="interaction">
    <interactant intactId="EBI-12195227">
        <id>Q8NBD8</id>
    </interactant>
    <interactant intactId="EBI-7545592">
        <id>Q9H6H4</id>
        <label>REEP4</label>
    </interactant>
    <organismsDiffer>false</organismsDiffer>
    <experiments>3</experiments>
</comment>
<comment type="interaction">
    <interactant intactId="EBI-12195227">
        <id>Q8NBD8</id>
    </interactant>
    <interactant intactId="EBI-1058865">
        <id>O75396</id>
        <label>SEC22B</label>
    </interactant>
    <organismsDiffer>false</organismsDiffer>
    <experiments>3</experiments>
</comment>
<comment type="interaction">
    <interactant intactId="EBI-12195227">
        <id>Q8NBD8</id>
    </interactant>
    <interactant intactId="EBI-18159983">
        <id>Q3KNW5</id>
        <label>SLC10A6</label>
    </interactant>
    <organismsDiffer>false</organismsDiffer>
    <experiments>3</experiments>
</comment>
<comment type="interaction">
    <interactant intactId="EBI-12195227">
        <id>Q8NBD8</id>
    </interactant>
    <interactant intactId="EBI-12898013">
        <id>Q9NP94</id>
        <label>SLC39A2</label>
    </interactant>
    <organismsDiffer>false</organismsDiffer>
    <experiments>3</experiments>
</comment>
<comment type="interaction">
    <interactant intactId="EBI-12195227">
        <id>Q8NBD8</id>
    </interactant>
    <interactant intactId="EBI-8032987">
        <id>Q8N9I0</id>
        <label>SYT2</label>
    </interactant>
    <organismsDiffer>false</organismsDiffer>
    <experiments>3</experiments>
</comment>
<comment type="interaction">
    <interactant intactId="EBI-12195227">
        <id>Q8NBD8</id>
    </interactant>
    <interactant intactId="EBI-12947623">
        <id>Q96MV1</id>
        <label>TLCD4</label>
    </interactant>
    <organismsDiffer>false</organismsDiffer>
    <experiments>3</experiments>
</comment>
<comment type="interaction">
    <interactant intactId="EBI-12195227">
        <id>Q8NBD8</id>
    </interactant>
    <interactant intactId="EBI-8638294">
        <id>Q9NUH8</id>
        <label>TMEM14B</label>
    </interactant>
    <organismsDiffer>false</organismsDiffer>
    <experiments>3</experiments>
</comment>
<comment type="interaction">
    <interactant intactId="EBI-12195227">
        <id>Q8NBD8</id>
    </interactant>
    <interactant intactId="EBI-11722971">
        <id>Q53FP2</id>
        <label>TMEM35A</label>
    </interactant>
    <organismsDiffer>false</organismsDiffer>
    <experiments>3</experiments>
</comment>
<comment type="interaction">
    <interactant intactId="EBI-12195227">
        <id>Q8NBD8</id>
    </interactant>
    <interactant intactId="EBI-3923061">
        <id>Q96B21</id>
        <label>TMEM45B</label>
    </interactant>
    <organismsDiffer>false</organismsDiffer>
    <experiments>3</experiments>
</comment>
<comment type="interaction">
    <interactant intactId="EBI-12195227">
        <id>Q8NBD8</id>
    </interactant>
    <interactant intactId="EBI-12345267">
        <id>O15393-2</id>
        <label>TMPRSS2</label>
    </interactant>
    <organismsDiffer>false</organismsDiffer>
    <experiments>3</experiments>
</comment>
<comment type="interaction">
    <interactant intactId="EBI-12195227">
        <id>Q8NBD8</id>
    </interactant>
    <interactant intactId="EBI-12003468">
        <id>A0AVG3</id>
        <label>TSNARE1</label>
    </interactant>
    <organismsDiffer>false</organismsDiffer>
    <experiments>3</experiments>
</comment>
<comment type="interaction">
    <interactant intactId="EBI-12195227">
        <id>Q8NBD8</id>
    </interactant>
    <interactant intactId="EBI-1059156">
        <id>Q9P0L0</id>
        <label>VAPA</label>
    </interactant>
    <organismsDiffer>false</organismsDiffer>
    <experiments>3</experiments>
</comment>
<comment type="interaction">
    <interactant intactId="EBI-12195227">
        <id>Q8NBD8</id>
    </interactant>
    <interactant intactId="EBI-744988">
        <id>Q9H7M9</id>
        <label>VSIR</label>
    </interactant>
    <organismsDiffer>false</organismsDiffer>
    <experiments>3</experiments>
</comment>
<comment type="subcellular location">
    <subcellularLocation>
        <location evidence="2">Membrane</location>
        <topology evidence="2">Multi-pass membrane protein</topology>
    </subcellularLocation>
</comment>
<comment type="similarity">
    <text evidence="2">Belongs to the TMEM229 family.</text>
</comment>
<evidence type="ECO:0000255" key="1"/>
<evidence type="ECO:0000305" key="2"/>
<gene>
    <name type="primary">TMEM229B</name>
    <name type="synonym">C14orf83</name>
</gene>
<accession>Q8NBD8</accession>
<reference key="1">
    <citation type="journal article" date="2004" name="Nat. Genet.">
        <title>Complete sequencing and characterization of 21,243 full-length human cDNAs.</title>
        <authorList>
            <person name="Ota T."/>
            <person name="Suzuki Y."/>
            <person name="Nishikawa T."/>
            <person name="Otsuki T."/>
            <person name="Sugiyama T."/>
            <person name="Irie R."/>
            <person name="Wakamatsu A."/>
            <person name="Hayashi K."/>
            <person name="Sato H."/>
            <person name="Nagai K."/>
            <person name="Kimura K."/>
            <person name="Makita H."/>
            <person name="Sekine M."/>
            <person name="Obayashi M."/>
            <person name="Nishi T."/>
            <person name="Shibahara T."/>
            <person name="Tanaka T."/>
            <person name="Ishii S."/>
            <person name="Yamamoto J."/>
            <person name="Saito K."/>
            <person name="Kawai Y."/>
            <person name="Isono Y."/>
            <person name="Nakamura Y."/>
            <person name="Nagahari K."/>
            <person name="Murakami K."/>
            <person name="Yasuda T."/>
            <person name="Iwayanagi T."/>
            <person name="Wagatsuma M."/>
            <person name="Shiratori A."/>
            <person name="Sudo H."/>
            <person name="Hosoiri T."/>
            <person name="Kaku Y."/>
            <person name="Kodaira H."/>
            <person name="Kondo H."/>
            <person name="Sugawara M."/>
            <person name="Takahashi M."/>
            <person name="Kanda K."/>
            <person name="Yokoi T."/>
            <person name="Furuya T."/>
            <person name="Kikkawa E."/>
            <person name="Omura Y."/>
            <person name="Abe K."/>
            <person name="Kamihara K."/>
            <person name="Katsuta N."/>
            <person name="Sato K."/>
            <person name="Tanikawa M."/>
            <person name="Yamazaki M."/>
            <person name="Ninomiya K."/>
            <person name="Ishibashi T."/>
            <person name="Yamashita H."/>
            <person name="Murakawa K."/>
            <person name="Fujimori K."/>
            <person name="Tanai H."/>
            <person name="Kimata M."/>
            <person name="Watanabe M."/>
            <person name="Hiraoka S."/>
            <person name="Chiba Y."/>
            <person name="Ishida S."/>
            <person name="Ono Y."/>
            <person name="Takiguchi S."/>
            <person name="Watanabe S."/>
            <person name="Yosida M."/>
            <person name="Hotuta T."/>
            <person name="Kusano J."/>
            <person name="Kanehori K."/>
            <person name="Takahashi-Fujii A."/>
            <person name="Hara H."/>
            <person name="Tanase T.-O."/>
            <person name="Nomura Y."/>
            <person name="Togiya S."/>
            <person name="Komai F."/>
            <person name="Hara R."/>
            <person name="Takeuchi K."/>
            <person name="Arita M."/>
            <person name="Imose N."/>
            <person name="Musashino K."/>
            <person name="Yuuki H."/>
            <person name="Oshima A."/>
            <person name="Sasaki N."/>
            <person name="Aotsuka S."/>
            <person name="Yoshikawa Y."/>
            <person name="Matsunawa H."/>
            <person name="Ichihara T."/>
            <person name="Shiohata N."/>
            <person name="Sano S."/>
            <person name="Moriya S."/>
            <person name="Momiyama H."/>
            <person name="Satoh N."/>
            <person name="Takami S."/>
            <person name="Terashima Y."/>
            <person name="Suzuki O."/>
            <person name="Nakagawa S."/>
            <person name="Senoh A."/>
            <person name="Mizoguchi H."/>
            <person name="Goto Y."/>
            <person name="Shimizu F."/>
            <person name="Wakebe H."/>
            <person name="Hishigaki H."/>
            <person name="Watanabe T."/>
            <person name="Sugiyama A."/>
            <person name="Takemoto M."/>
            <person name="Kawakami B."/>
            <person name="Yamazaki M."/>
            <person name="Watanabe K."/>
            <person name="Kumagai A."/>
            <person name="Itakura S."/>
            <person name="Fukuzumi Y."/>
            <person name="Fujimori Y."/>
            <person name="Komiyama M."/>
            <person name="Tashiro H."/>
            <person name="Tanigami A."/>
            <person name="Fujiwara T."/>
            <person name="Ono T."/>
            <person name="Yamada K."/>
            <person name="Fujii Y."/>
            <person name="Ozaki K."/>
            <person name="Hirao M."/>
            <person name="Ohmori Y."/>
            <person name="Kawabata A."/>
            <person name="Hikiji T."/>
            <person name="Kobatake N."/>
            <person name="Inagaki H."/>
            <person name="Ikema Y."/>
            <person name="Okamoto S."/>
            <person name="Okitani R."/>
            <person name="Kawakami T."/>
            <person name="Noguchi S."/>
            <person name="Itoh T."/>
            <person name="Shigeta K."/>
            <person name="Senba T."/>
            <person name="Matsumura K."/>
            <person name="Nakajima Y."/>
            <person name="Mizuno T."/>
            <person name="Morinaga M."/>
            <person name="Sasaki M."/>
            <person name="Togashi T."/>
            <person name="Oyama M."/>
            <person name="Hata H."/>
            <person name="Watanabe M."/>
            <person name="Komatsu T."/>
            <person name="Mizushima-Sugano J."/>
            <person name="Satoh T."/>
            <person name="Shirai Y."/>
            <person name="Takahashi Y."/>
            <person name="Nakagawa K."/>
            <person name="Okumura K."/>
            <person name="Nagase T."/>
            <person name="Nomura N."/>
            <person name="Kikuchi H."/>
            <person name="Masuho Y."/>
            <person name="Yamashita R."/>
            <person name="Nakai K."/>
            <person name="Yada T."/>
            <person name="Nakamura Y."/>
            <person name="Ohara O."/>
            <person name="Isogai T."/>
            <person name="Sugano S."/>
        </authorList>
    </citation>
    <scope>NUCLEOTIDE SEQUENCE [LARGE SCALE MRNA]</scope>
    <source>
        <tissue>Cerebellum</tissue>
    </source>
</reference>
<reference key="2">
    <citation type="journal article" date="2004" name="Genome Res.">
        <title>The status, quality, and expansion of the NIH full-length cDNA project: the Mammalian Gene Collection (MGC).</title>
        <authorList>
            <consortium name="The MGC Project Team"/>
        </authorList>
    </citation>
    <scope>NUCLEOTIDE SEQUENCE [LARGE SCALE MRNA]</scope>
    <source>
        <tissue>Brain</tissue>
    </source>
</reference>
<organism>
    <name type="scientific">Homo sapiens</name>
    <name type="common">Human</name>
    <dbReference type="NCBI Taxonomy" id="9606"/>
    <lineage>
        <taxon>Eukaryota</taxon>
        <taxon>Metazoa</taxon>
        <taxon>Chordata</taxon>
        <taxon>Craniata</taxon>
        <taxon>Vertebrata</taxon>
        <taxon>Euteleostomi</taxon>
        <taxon>Mammalia</taxon>
        <taxon>Eutheria</taxon>
        <taxon>Euarchontoglires</taxon>
        <taxon>Primates</taxon>
        <taxon>Haplorrhini</taxon>
        <taxon>Catarrhini</taxon>
        <taxon>Hominidae</taxon>
        <taxon>Homo</taxon>
    </lineage>
</organism>
<dbReference type="EMBL" id="AK090706">
    <property type="protein sequence ID" value="BAC03507.1"/>
    <property type="molecule type" value="mRNA"/>
</dbReference>
<dbReference type="EMBL" id="BC104940">
    <property type="protein sequence ID" value="AAI04941.1"/>
    <property type="molecule type" value="mRNA"/>
</dbReference>
<dbReference type="EMBL" id="BC104942">
    <property type="protein sequence ID" value="AAI04943.1"/>
    <property type="molecule type" value="mRNA"/>
</dbReference>
<dbReference type="CCDS" id="CCDS9783.1"/>
<dbReference type="RefSeq" id="NP_001335471.1">
    <property type="nucleotide sequence ID" value="NM_001348542.2"/>
</dbReference>
<dbReference type="RefSeq" id="NP_001335472.1">
    <property type="nucleotide sequence ID" value="NM_001348543.2"/>
</dbReference>
<dbReference type="RefSeq" id="NP_001335473.1">
    <property type="nucleotide sequence ID" value="NM_001348544.2"/>
</dbReference>
<dbReference type="RefSeq" id="NP_001335475.1">
    <property type="nucleotide sequence ID" value="NM_001348546.2"/>
</dbReference>
<dbReference type="RefSeq" id="NP_001335476.1">
    <property type="nucleotide sequence ID" value="NM_001348547.2"/>
</dbReference>
<dbReference type="RefSeq" id="NP_001335477.1">
    <property type="nucleotide sequence ID" value="NM_001348548.2"/>
</dbReference>
<dbReference type="RefSeq" id="NP_001335478.1">
    <property type="nucleotide sequence ID" value="NM_001348549.2"/>
</dbReference>
<dbReference type="RefSeq" id="NP_872332.1">
    <property type="nucleotide sequence ID" value="NM_182526.3"/>
</dbReference>
<dbReference type="RefSeq" id="XP_016876542.1">
    <property type="nucleotide sequence ID" value="XM_017021053.1"/>
</dbReference>
<dbReference type="RefSeq" id="XP_016876544.1">
    <property type="nucleotide sequence ID" value="XM_017021055.1"/>
</dbReference>
<dbReference type="RefSeq" id="XP_047286992.1">
    <property type="nucleotide sequence ID" value="XM_047431036.1"/>
</dbReference>
<dbReference type="RefSeq" id="XP_047286993.1">
    <property type="nucleotide sequence ID" value="XM_047431037.1"/>
</dbReference>
<dbReference type="RefSeq" id="XP_047286994.1">
    <property type="nucleotide sequence ID" value="XM_047431038.1"/>
</dbReference>
<dbReference type="RefSeq" id="XP_054231469.1">
    <property type="nucleotide sequence ID" value="XM_054375494.1"/>
</dbReference>
<dbReference type="RefSeq" id="XP_054231470.1">
    <property type="nucleotide sequence ID" value="XM_054375495.1"/>
</dbReference>
<dbReference type="RefSeq" id="XP_054231471.1">
    <property type="nucleotide sequence ID" value="XM_054375496.1"/>
</dbReference>
<dbReference type="BioGRID" id="127773">
    <property type="interactions" value="43"/>
</dbReference>
<dbReference type="FunCoup" id="Q8NBD8">
    <property type="interactions" value="26"/>
</dbReference>
<dbReference type="IntAct" id="Q8NBD8">
    <property type="interactions" value="42"/>
</dbReference>
<dbReference type="STRING" id="9606.ENSP00000350050"/>
<dbReference type="BioMuta" id="TMEM229B"/>
<dbReference type="DMDM" id="74730125"/>
<dbReference type="MassIVE" id="Q8NBD8"/>
<dbReference type="PaxDb" id="9606-ENSP00000350050"/>
<dbReference type="PeptideAtlas" id="Q8NBD8"/>
<dbReference type="TopDownProteomics" id="Q8NBD8"/>
<dbReference type="Antibodypedia" id="52317">
    <property type="antibodies" value="5 antibodies from 5 providers"/>
</dbReference>
<dbReference type="DNASU" id="161145"/>
<dbReference type="Ensembl" id="ENST00000357461.7">
    <property type="protein sequence ID" value="ENSP00000350050.2"/>
    <property type="gene ID" value="ENSG00000198133.9"/>
</dbReference>
<dbReference type="Ensembl" id="ENST00000554278.6">
    <property type="protein sequence ID" value="ENSP00000452402.2"/>
    <property type="gene ID" value="ENSG00000198133.9"/>
</dbReference>
<dbReference type="Ensembl" id="ENST00000554480.6">
    <property type="protein sequence ID" value="ENSP00000450859.2"/>
    <property type="gene ID" value="ENSG00000198133.9"/>
</dbReference>
<dbReference type="Ensembl" id="ENST00000555638.5">
    <property type="protein sequence ID" value="ENSP00000452201.1"/>
    <property type="gene ID" value="ENSG00000198133.9"/>
</dbReference>
<dbReference type="Ensembl" id="ENST00000555994.6">
    <property type="protein sequence ID" value="ENSP00000452144.2"/>
    <property type="gene ID" value="ENSG00000198133.9"/>
</dbReference>
<dbReference type="Ensembl" id="ENST00000557006.6">
    <property type="protein sequence ID" value="ENSP00000451774.1"/>
    <property type="gene ID" value="ENSG00000198133.9"/>
</dbReference>
<dbReference type="GeneID" id="161145"/>
<dbReference type="KEGG" id="hsa:161145"/>
<dbReference type="MANE-Select" id="ENST00000554480.6">
    <property type="protein sequence ID" value="ENSP00000450859.2"/>
    <property type="RefSeq nucleotide sequence ID" value="NM_001348543.2"/>
    <property type="RefSeq protein sequence ID" value="NP_001335472.1"/>
</dbReference>
<dbReference type="UCSC" id="uc001xjj.2">
    <property type="organism name" value="human"/>
</dbReference>
<dbReference type="AGR" id="HGNC:20130"/>
<dbReference type="CTD" id="161145"/>
<dbReference type="DisGeNET" id="161145"/>
<dbReference type="GeneCards" id="TMEM229B"/>
<dbReference type="HGNC" id="HGNC:20130">
    <property type="gene designation" value="TMEM229B"/>
</dbReference>
<dbReference type="HPA" id="ENSG00000198133">
    <property type="expression patterns" value="Tissue enhanced (brain)"/>
</dbReference>
<dbReference type="MIM" id="619022">
    <property type="type" value="gene"/>
</dbReference>
<dbReference type="neXtProt" id="NX_Q8NBD8"/>
<dbReference type="OpenTargets" id="ENSG00000198133"/>
<dbReference type="PharmGKB" id="PA165479330"/>
<dbReference type="VEuPathDB" id="HostDB:ENSG00000198133"/>
<dbReference type="eggNOG" id="ENOG502QTFF">
    <property type="taxonomic scope" value="Eukaryota"/>
</dbReference>
<dbReference type="GeneTree" id="ENSGT00390000010899"/>
<dbReference type="HOGENOM" id="CLU_102218_0_0_1"/>
<dbReference type="InParanoid" id="Q8NBD8"/>
<dbReference type="OMA" id="DGWSNHR"/>
<dbReference type="OrthoDB" id="5946847at2759"/>
<dbReference type="PAN-GO" id="Q8NBD8">
    <property type="GO annotations" value="0 GO annotations based on evolutionary models"/>
</dbReference>
<dbReference type="PhylomeDB" id="Q8NBD8"/>
<dbReference type="TreeFam" id="TF336481"/>
<dbReference type="PathwayCommons" id="Q8NBD8"/>
<dbReference type="SignaLink" id="Q8NBD8"/>
<dbReference type="BioGRID-ORCS" id="161145">
    <property type="hits" value="16 hits in 1139 CRISPR screens"/>
</dbReference>
<dbReference type="ChiTaRS" id="TMEM229B">
    <property type="organism name" value="human"/>
</dbReference>
<dbReference type="GeneWiki" id="TMEM229B"/>
<dbReference type="GenomeRNAi" id="161145"/>
<dbReference type="Pharos" id="Q8NBD8">
    <property type="development level" value="Tdark"/>
</dbReference>
<dbReference type="PRO" id="PR:Q8NBD8"/>
<dbReference type="Proteomes" id="UP000005640">
    <property type="component" value="Chromosome 14"/>
</dbReference>
<dbReference type="RNAct" id="Q8NBD8">
    <property type="molecule type" value="protein"/>
</dbReference>
<dbReference type="Bgee" id="ENSG00000198133">
    <property type="expression patterns" value="Expressed in lateral nuclear group of thalamus and 153 other cell types or tissues"/>
</dbReference>
<dbReference type="ExpressionAtlas" id="Q8NBD8">
    <property type="expression patterns" value="baseline and differential"/>
</dbReference>
<dbReference type="GO" id="GO:0016020">
    <property type="term" value="C:membrane"/>
    <property type="evidence" value="ECO:0007669"/>
    <property type="project" value="UniProtKB-SubCell"/>
</dbReference>
<dbReference type="GO" id="GO:0042116">
    <property type="term" value="P:macrophage activation"/>
    <property type="evidence" value="ECO:0007669"/>
    <property type="project" value="Ensembl"/>
</dbReference>
<dbReference type="GO" id="GO:0009617">
    <property type="term" value="P:response to bacterium"/>
    <property type="evidence" value="ECO:0007669"/>
    <property type="project" value="Ensembl"/>
</dbReference>
<dbReference type="InterPro" id="IPR010540">
    <property type="entry name" value="CmpB_TMEM229"/>
</dbReference>
<dbReference type="PANTHER" id="PTHR31746">
    <property type="entry name" value="TRANSMEMBRANE PROTEIN 229 FAMILY MEMBER"/>
    <property type="match status" value="1"/>
</dbReference>
<dbReference type="PANTHER" id="PTHR31746:SF3">
    <property type="entry name" value="TRANSMEMBRANE PROTEIN 229B"/>
    <property type="match status" value="1"/>
</dbReference>
<dbReference type="Pfam" id="PF06541">
    <property type="entry name" value="ABC_trans_CmpB"/>
    <property type="match status" value="1"/>
</dbReference>